<dbReference type="EMBL" id="AY303777">
    <property type="protein sequence ID" value="AAP76182.1"/>
    <property type="molecule type" value="mRNA"/>
</dbReference>
<dbReference type="EMBL" id="AK301982">
    <property type="protein sequence ID" value="BAG63390.1"/>
    <property type="molecule type" value="mRNA"/>
</dbReference>
<dbReference type="EMBL" id="CH471062">
    <property type="protein sequence ID" value="EAW61396.1"/>
    <property type="molecule type" value="Genomic_DNA"/>
</dbReference>
<dbReference type="EMBL" id="BC003114">
    <property type="protein sequence ID" value="AAH03114.2"/>
    <property type="molecule type" value="mRNA"/>
</dbReference>
<dbReference type="EMBL" id="BC007436">
    <property type="protein sequence ID" value="AAH07436.2"/>
    <property type="molecule type" value="mRNA"/>
</dbReference>
<dbReference type="CCDS" id="CCDS4389.1">
    <molecule id="Q96IK1-1"/>
</dbReference>
<dbReference type="CCDS" id="CCDS54951.1">
    <molecule id="Q96IK1-2"/>
</dbReference>
<dbReference type="RefSeq" id="NP_001153123.1">
    <molecule id="Q96IK1-2"/>
    <property type="nucleotide sequence ID" value="NM_001159651.3"/>
</dbReference>
<dbReference type="RefSeq" id="NP_612378.1">
    <molecule id="Q96IK1-1"/>
    <property type="nucleotide sequence ID" value="NM_138369.3"/>
</dbReference>
<dbReference type="BioGRID" id="124809">
    <property type="interactions" value="33"/>
</dbReference>
<dbReference type="ComplexPortal" id="CPX-7111">
    <property type="entry name" value="Histone-lysine N-methyltransferase complex, SET1B variant"/>
</dbReference>
<dbReference type="CORUM" id="Q96IK1"/>
<dbReference type="FunCoup" id="Q96IK1">
    <property type="interactions" value="306"/>
</dbReference>
<dbReference type="IntAct" id="Q96IK1">
    <property type="interactions" value="36"/>
</dbReference>
<dbReference type="STRING" id="9606.ENSP00000309644"/>
<dbReference type="GlyGen" id="Q96IK1">
    <property type="glycosylation" value="1 site, 1 O-linked glycan (1 site)"/>
</dbReference>
<dbReference type="iPTMnet" id="Q96IK1"/>
<dbReference type="PhosphoSitePlus" id="Q96IK1"/>
<dbReference type="BioMuta" id="BOD1"/>
<dbReference type="DMDM" id="74732069"/>
<dbReference type="jPOST" id="Q96IK1"/>
<dbReference type="MassIVE" id="Q96IK1"/>
<dbReference type="PaxDb" id="9606-ENSP00000309644"/>
<dbReference type="PeptideAtlas" id="Q96IK1"/>
<dbReference type="ProteomicsDB" id="76836">
    <molecule id="Q96IK1-1"/>
</dbReference>
<dbReference type="ProteomicsDB" id="76837">
    <molecule id="Q96IK1-2"/>
</dbReference>
<dbReference type="Pumba" id="Q96IK1"/>
<dbReference type="Antibodypedia" id="45945">
    <property type="antibodies" value="148 antibodies from 23 providers"/>
</dbReference>
<dbReference type="DNASU" id="91272"/>
<dbReference type="Ensembl" id="ENST00000285908.5">
    <molecule id="Q96IK1-2"/>
    <property type="protein sequence ID" value="ENSP00000285908.5"/>
    <property type="gene ID" value="ENSG00000145919.11"/>
</dbReference>
<dbReference type="Ensembl" id="ENST00000311086.9">
    <molecule id="Q96IK1-1"/>
    <property type="protein sequence ID" value="ENSP00000309644.4"/>
    <property type="gene ID" value="ENSG00000145919.11"/>
</dbReference>
<dbReference type="GeneID" id="91272"/>
<dbReference type="KEGG" id="hsa:91272"/>
<dbReference type="MANE-Select" id="ENST00000311086.9">
    <property type="protein sequence ID" value="ENSP00000309644.4"/>
    <property type="RefSeq nucleotide sequence ID" value="NM_138369.3"/>
    <property type="RefSeq protein sequence ID" value="NP_612378.1"/>
</dbReference>
<dbReference type="UCSC" id="uc003mcq.3">
    <molecule id="Q96IK1-1"/>
    <property type="organism name" value="human"/>
</dbReference>
<dbReference type="AGR" id="HGNC:25114"/>
<dbReference type="CTD" id="91272"/>
<dbReference type="DisGeNET" id="91272"/>
<dbReference type="GeneCards" id="BOD1"/>
<dbReference type="HGNC" id="HGNC:25114">
    <property type="gene designation" value="BOD1"/>
</dbReference>
<dbReference type="HPA" id="ENSG00000145919">
    <property type="expression patterns" value="Low tissue specificity"/>
</dbReference>
<dbReference type="MalaCards" id="BOD1"/>
<dbReference type="MIM" id="616745">
    <property type="type" value="gene"/>
</dbReference>
<dbReference type="neXtProt" id="NX_Q96IK1"/>
<dbReference type="OpenTargets" id="ENSG00000145919"/>
<dbReference type="PharmGKB" id="PA164716651"/>
<dbReference type="VEuPathDB" id="HostDB:ENSG00000145919"/>
<dbReference type="eggNOG" id="ENOG502S57W">
    <property type="taxonomic scope" value="Eukaryota"/>
</dbReference>
<dbReference type="GeneTree" id="ENSGT00940000154979"/>
<dbReference type="HOGENOM" id="CLU_139504_0_0_1"/>
<dbReference type="InParanoid" id="Q96IK1"/>
<dbReference type="OMA" id="IICQVVD"/>
<dbReference type="OrthoDB" id="7605699at2759"/>
<dbReference type="PAN-GO" id="Q96IK1">
    <property type="GO annotations" value="7 GO annotations based on evolutionary models"/>
</dbReference>
<dbReference type="PhylomeDB" id="Q96IK1"/>
<dbReference type="TreeFam" id="TF325311"/>
<dbReference type="PathwayCommons" id="Q96IK1"/>
<dbReference type="Reactome" id="R-HSA-9772755">
    <property type="pathway name" value="Formation of WDR5-containing histone-modifying complexes"/>
</dbReference>
<dbReference type="SignaLink" id="Q96IK1"/>
<dbReference type="BioGRID-ORCS" id="91272">
    <property type="hits" value="14 hits in 1112 CRISPR screens"/>
</dbReference>
<dbReference type="ChiTaRS" id="BOD1">
    <property type="organism name" value="human"/>
</dbReference>
<dbReference type="GenomeRNAi" id="91272"/>
<dbReference type="Pharos" id="Q96IK1">
    <property type="development level" value="Tbio"/>
</dbReference>
<dbReference type="PRO" id="PR:Q96IK1"/>
<dbReference type="Proteomes" id="UP000005640">
    <property type="component" value="Chromosome 5"/>
</dbReference>
<dbReference type="RNAct" id="Q96IK1">
    <property type="molecule type" value="protein"/>
</dbReference>
<dbReference type="Bgee" id="ENSG00000145919">
    <property type="expression patterns" value="Expressed in oocyte and 186 other cell types or tissues"/>
</dbReference>
<dbReference type="ExpressionAtlas" id="Q96IK1">
    <property type="expression patterns" value="baseline and differential"/>
</dbReference>
<dbReference type="GO" id="GO:0005813">
    <property type="term" value="C:centrosome"/>
    <property type="evidence" value="ECO:0000314"/>
    <property type="project" value="UniProtKB"/>
</dbReference>
<dbReference type="GO" id="GO:0005737">
    <property type="term" value="C:cytoplasm"/>
    <property type="evidence" value="ECO:0007669"/>
    <property type="project" value="UniProtKB-KW"/>
</dbReference>
<dbReference type="GO" id="GO:0005654">
    <property type="term" value="C:nucleoplasm"/>
    <property type="evidence" value="ECO:0000304"/>
    <property type="project" value="Reactome"/>
</dbReference>
<dbReference type="GO" id="GO:0000940">
    <property type="term" value="C:outer kinetochore"/>
    <property type="evidence" value="ECO:0000314"/>
    <property type="project" value="UniProtKB"/>
</dbReference>
<dbReference type="GO" id="GO:0048188">
    <property type="term" value="C:Set1C/COMPASS complex"/>
    <property type="evidence" value="ECO:0000353"/>
    <property type="project" value="ComplexPortal"/>
</dbReference>
<dbReference type="GO" id="GO:0005876">
    <property type="term" value="C:spindle microtubule"/>
    <property type="evidence" value="ECO:0000314"/>
    <property type="project" value="UniProtKB"/>
</dbReference>
<dbReference type="GO" id="GO:0000922">
    <property type="term" value="C:spindle pole"/>
    <property type="evidence" value="ECO:0000314"/>
    <property type="project" value="UniProtKB"/>
</dbReference>
<dbReference type="GO" id="GO:0051721">
    <property type="term" value="F:protein phosphatase 2A binding"/>
    <property type="evidence" value="ECO:0000353"/>
    <property type="project" value="UniProtKB"/>
</dbReference>
<dbReference type="GO" id="GO:0004864">
    <property type="term" value="F:protein phosphatase inhibitor activity"/>
    <property type="evidence" value="ECO:0000314"/>
    <property type="project" value="UniProtKB"/>
</dbReference>
<dbReference type="GO" id="GO:0051301">
    <property type="term" value="P:cell division"/>
    <property type="evidence" value="ECO:0007669"/>
    <property type="project" value="UniProtKB-KW"/>
</dbReference>
<dbReference type="GO" id="GO:0007080">
    <property type="term" value="P:mitotic metaphase chromosome alignment"/>
    <property type="evidence" value="ECO:0000315"/>
    <property type="project" value="UniProtKB"/>
</dbReference>
<dbReference type="GO" id="GO:1990758">
    <property type="term" value="P:mitotic sister chromatid biorientation"/>
    <property type="evidence" value="ECO:0000315"/>
    <property type="project" value="UniProtKB"/>
</dbReference>
<dbReference type="GO" id="GO:0071962">
    <property type="term" value="P:mitotic sister chromatid cohesion, centromeric"/>
    <property type="evidence" value="ECO:0000315"/>
    <property type="project" value="UniProtKB"/>
</dbReference>
<dbReference type="GO" id="GO:0071459">
    <property type="term" value="P:protein localization to chromosome, centromeric region"/>
    <property type="evidence" value="ECO:0000315"/>
    <property type="project" value="UniProtKB"/>
</dbReference>
<dbReference type="InterPro" id="IPR055264">
    <property type="entry name" value="BOD1/SHG1_dom"/>
</dbReference>
<dbReference type="InterPro" id="IPR043244">
    <property type="entry name" value="BOD1L1"/>
</dbReference>
<dbReference type="PANTHER" id="PTHR47391">
    <property type="entry name" value="BIORIENTATION OF CHROMOSOMES IN CELL DIVISION 1 LIKE 1"/>
    <property type="match status" value="1"/>
</dbReference>
<dbReference type="PANTHER" id="PTHR47391:SF1">
    <property type="entry name" value="BIORIENTATION OF CHROMOSOMES IN CELL DIVISION 1 LIKE 1"/>
    <property type="match status" value="1"/>
</dbReference>
<dbReference type="Pfam" id="PF05205">
    <property type="entry name" value="COMPASS-Shg1"/>
    <property type="match status" value="1"/>
</dbReference>
<proteinExistence type="evidence at protein level"/>
<sequence length="185" mass="19196">MADGGGGGGTGAVGGGGTSQASAGAATGATGASGGGGPINPASLPPGDPQLIALIVEQLKSRGLFDSFRRDCLADVDTKPAYQNLRQKVDNFVSTHLDKQEWNPTMNKNQLRNGLRQSVVQSGMLEAGVDRIISQVVDPKLNHIFRPQIERAIHEFLAAQKKAAVPAPPPEPEGQDPPAPSQDTS</sequence>
<feature type="chain" id="PRO_0000187028" description="Biorientation of chromosomes in cell division protein 1">
    <location>
        <begin position="1"/>
        <end position="185"/>
    </location>
</feature>
<feature type="region of interest" description="Disordered" evidence="1">
    <location>
        <begin position="1"/>
        <end position="45"/>
    </location>
</feature>
<feature type="region of interest" description="Disordered" evidence="1">
    <location>
        <begin position="160"/>
        <end position="185"/>
    </location>
</feature>
<feature type="compositionally biased region" description="Gly residues" evidence="1">
    <location>
        <begin position="1"/>
        <end position="18"/>
    </location>
</feature>
<feature type="compositionally biased region" description="Low complexity" evidence="1">
    <location>
        <begin position="19"/>
        <end position="30"/>
    </location>
</feature>
<feature type="compositionally biased region" description="Pro residues" evidence="1">
    <location>
        <begin position="166"/>
        <end position="185"/>
    </location>
</feature>
<feature type="splice variant" id="VSP_016161" description="In isoform 2." evidence="4">
    <original>SGMLEAGV</original>
    <variation>IRQTPFES</variation>
    <location>
        <begin position="122"/>
        <end position="129"/>
    </location>
</feature>
<feature type="splice variant" id="VSP_016162" description="In isoform 2." evidence="4">
    <location>
        <begin position="130"/>
        <end position="185"/>
    </location>
</feature>
<organism>
    <name type="scientific">Homo sapiens</name>
    <name type="common">Human</name>
    <dbReference type="NCBI Taxonomy" id="9606"/>
    <lineage>
        <taxon>Eukaryota</taxon>
        <taxon>Metazoa</taxon>
        <taxon>Chordata</taxon>
        <taxon>Craniata</taxon>
        <taxon>Vertebrata</taxon>
        <taxon>Euteleostomi</taxon>
        <taxon>Mammalia</taxon>
        <taxon>Eutheria</taxon>
        <taxon>Euarchontoglires</taxon>
        <taxon>Primates</taxon>
        <taxon>Haplorrhini</taxon>
        <taxon>Catarrhini</taxon>
        <taxon>Hominidae</taxon>
        <taxon>Homo</taxon>
    </lineage>
</organism>
<evidence type="ECO:0000256" key="1">
    <source>
        <dbReference type="SAM" id="MobiDB-lite"/>
    </source>
</evidence>
<evidence type="ECO:0000269" key="2">
    <source>
    </source>
</evidence>
<evidence type="ECO:0000269" key="3">
    <source>
    </source>
</evidence>
<evidence type="ECO:0000303" key="4">
    <source>
    </source>
</evidence>
<evidence type="ECO:0000305" key="5"/>
<gene>
    <name type="primary">BOD1</name>
    <name type="synonym">FAM44B</name>
</gene>
<reference key="1">
    <citation type="submission" date="2003-05" db="EMBL/GenBank/DDBJ databases">
        <authorList>
            <person name="Li H."/>
            <person name="Ke R."/>
            <person name="Zhou G."/>
            <person name="Shen C."/>
            <person name="Zheng G."/>
            <person name="Lin L."/>
            <person name="Yang S."/>
        </authorList>
    </citation>
    <scope>NUCLEOTIDE SEQUENCE [MRNA] (ISOFORM 1)</scope>
</reference>
<reference key="2">
    <citation type="journal article" date="2004" name="Nat. Genet.">
        <title>Complete sequencing and characterization of 21,243 full-length human cDNAs.</title>
        <authorList>
            <person name="Ota T."/>
            <person name="Suzuki Y."/>
            <person name="Nishikawa T."/>
            <person name="Otsuki T."/>
            <person name="Sugiyama T."/>
            <person name="Irie R."/>
            <person name="Wakamatsu A."/>
            <person name="Hayashi K."/>
            <person name="Sato H."/>
            <person name="Nagai K."/>
            <person name="Kimura K."/>
            <person name="Makita H."/>
            <person name="Sekine M."/>
            <person name="Obayashi M."/>
            <person name="Nishi T."/>
            <person name="Shibahara T."/>
            <person name="Tanaka T."/>
            <person name="Ishii S."/>
            <person name="Yamamoto J."/>
            <person name="Saito K."/>
            <person name="Kawai Y."/>
            <person name="Isono Y."/>
            <person name="Nakamura Y."/>
            <person name="Nagahari K."/>
            <person name="Murakami K."/>
            <person name="Yasuda T."/>
            <person name="Iwayanagi T."/>
            <person name="Wagatsuma M."/>
            <person name="Shiratori A."/>
            <person name="Sudo H."/>
            <person name="Hosoiri T."/>
            <person name="Kaku Y."/>
            <person name="Kodaira H."/>
            <person name="Kondo H."/>
            <person name="Sugawara M."/>
            <person name="Takahashi M."/>
            <person name="Kanda K."/>
            <person name="Yokoi T."/>
            <person name="Furuya T."/>
            <person name="Kikkawa E."/>
            <person name="Omura Y."/>
            <person name="Abe K."/>
            <person name="Kamihara K."/>
            <person name="Katsuta N."/>
            <person name="Sato K."/>
            <person name="Tanikawa M."/>
            <person name="Yamazaki M."/>
            <person name="Ninomiya K."/>
            <person name="Ishibashi T."/>
            <person name="Yamashita H."/>
            <person name="Murakawa K."/>
            <person name="Fujimori K."/>
            <person name="Tanai H."/>
            <person name="Kimata M."/>
            <person name="Watanabe M."/>
            <person name="Hiraoka S."/>
            <person name="Chiba Y."/>
            <person name="Ishida S."/>
            <person name="Ono Y."/>
            <person name="Takiguchi S."/>
            <person name="Watanabe S."/>
            <person name="Yosida M."/>
            <person name="Hotuta T."/>
            <person name="Kusano J."/>
            <person name="Kanehori K."/>
            <person name="Takahashi-Fujii A."/>
            <person name="Hara H."/>
            <person name="Tanase T.-O."/>
            <person name="Nomura Y."/>
            <person name="Togiya S."/>
            <person name="Komai F."/>
            <person name="Hara R."/>
            <person name="Takeuchi K."/>
            <person name="Arita M."/>
            <person name="Imose N."/>
            <person name="Musashino K."/>
            <person name="Yuuki H."/>
            <person name="Oshima A."/>
            <person name="Sasaki N."/>
            <person name="Aotsuka S."/>
            <person name="Yoshikawa Y."/>
            <person name="Matsunawa H."/>
            <person name="Ichihara T."/>
            <person name="Shiohata N."/>
            <person name="Sano S."/>
            <person name="Moriya S."/>
            <person name="Momiyama H."/>
            <person name="Satoh N."/>
            <person name="Takami S."/>
            <person name="Terashima Y."/>
            <person name="Suzuki O."/>
            <person name="Nakagawa S."/>
            <person name="Senoh A."/>
            <person name="Mizoguchi H."/>
            <person name="Goto Y."/>
            <person name="Shimizu F."/>
            <person name="Wakebe H."/>
            <person name="Hishigaki H."/>
            <person name="Watanabe T."/>
            <person name="Sugiyama A."/>
            <person name="Takemoto M."/>
            <person name="Kawakami B."/>
            <person name="Yamazaki M."/>
            <person name="Watanabe K."/>
            <person name="Kumagai A."/>
            <person name="Itakura S."/>
            <person name="Fukuzumi Y."/>
            <person name="Fujimori Y."/>
            <person name="Komiyama M."/>
            <person name="Tashiro H."/>
            <person name="Tanigami A."/>
            <person name="Fujiwara T."/>
            <person name="Ono T."/>
            <person name="Yamada K."/>
            <person name="Fujii Y."/>
            <person name="Ozaki K."/>
            <person name="Hirao M."/>
            <person name="Ohmori Y."/>
            <person name="Kawabata A."/>
            <person name="Hikiji T."/>
            <person name="Kobatake N."/>
            <person name="Inagaki H."/>
            <person name="Ikema Y."/>
            <person name="Okamoto S."/>
            <person name="Okitani R."/>
            <person name="Kawakami T."/>
            <person name="Noguchi S."/>
            <person name="Itoh T."/>
            <person name="Shigeta K."/>
            <person name="Senba T."/>
            <person name="Matsumura K."/>
            <person name="Nakajima Y."/>
            <person name="Mizuno T."/>
            <person name="Morinaga M."/>
            <person name="Sasaki M."/>
            <person name="Togashi T."/>
            <person name="Oyama M."/>
            <person name="Hata H."/>
            <person name="Watanabe M."/>
            <person name="Komatsu T."/>
            <person name="Mizushima-Sugano J."/>
            <person name="Satoh T."/>
            <person name="Shirai Y."/>
            <person name="Takahashi Y."/>
            <person name="Nakagawa K."/>
            <person name="Okumura K."/>
            <person name="Nagase T."/>
            <person name="Nomura N."/>
            <person name="Kikuchi H."/>
            <person name="Masuho Y."/>
            <person name="Yamashita R."/>
            <person name="Nakai K."/>
            <person name="Yada T."/>
            <person name="Nakamura Y."/>
            <person name="Ohara O."/>
            <person name="Isogai T."/>
            <person name="Sugano S."/>
        </authorList>
    </citation>
    <scope>NUCLEOTIDE SEQUENCE [LARGE SCALE MRNA] (ISOFORM 1)</scope>
    <source>
        <tissue>Testis</tissue>
    </source>
</reference>
<reference key="3">
    <citation type="submission" date="2005-09" db="EMBL/GenBank/DDBJ databases">
        <authorList>
            <person name="Mural R.J."/>
            <person name="Istrail S."/>
            <person name="Sutton G.G."/>
            <person name="Florea L."/>
            <person name="Halpern A.L."/>
            <person name="Mobarry C.M."/>
            <person name="Lippert R."/>
            <person name="Walenz B."/>
            <person name="Shatkay H."/>
            <person name="Dew I."/>
            <person name="Miller J.R."/>
            <person name="Flanigan M.J."/>
            <person name="Edwards N.J."/>
            <person name="Bolanos R."/>
            <person name="Fasulo D."/>
            <person name="Halldorsson B.V."/>
            <person name="Hannenhalli S."/>
            <person name="Turner R."/>
            <person name="Yooseph S."/>
            <person name="Lu F."/>
            <person name="Nusskern D.R."/>
            <person name="Shue B.C."/>
            <person name="Zheng X.H."/>
            <person name="Zhong F."/>
            <person name="Delcher A.L."/>
            <person name="Huson D.H."/>
            <person name="Kravitz S.A."/>
            <person name="Mouchard L."/>
            <person name="Reinert K."/>
            <person name="Remington K.A."/>
            <person name="Clark A.G."/>
            <person name="Waterman M.S."/>
            <person name="Eichler E.E."/>
            <person name="Adams M.D."/>
            <person name="Hunkapiller M.W."/>
            <person name="Myers E.W."/>
            <person name="Venter J.C."/>
        </authorList>
    </citation>
    <scope>NUCLEOTIDE SEQUENCE [LARGE SCALE GENOMIC DNA]</scope>
</reference>
<reference key="4">
    <citation type="journal article" date="2004" name="Genome Res.">
        <title>The status, quality, and expansion of the NIH full-length cDNA project: the Mammalian Gene Collection (MGC).</title>
        <authorList>
            <consortium name="The MGC Project Team"/>
        </authorList>
    </citation>
    <scope>NUCLEOTIDE SEQUENCE [LARGE SCALE MRNA] (ISOFORM 2)</scope>
    <source>
        <tissue>Lung</tissue>
        <tissue>Muscle</tissue>
    </source>
</reference>
<reference key="5">
    <citation type="journal article" date="2007" name="J. Cell Biol.">
        <title>Bod1, a novel kinetochore protein required for chromosome biorientation.</title>
        <authorList>
            <person name="Porter I.M."/>
            <person name="McClelland S.E."/>
            <person name="Khoudoli G.A."/>
            <person name="Hunter C.J."/>
            <person name="Andersen J.S."/>
            <person name="McAinsh A.D."/>
            <person name="Blow J.J."/>
            <person name="Swedlow J.R."/>
        </authorList>
    </citation>
    <scope>FUNCTION</scope>
    <scope>SUBCELLULAR LOCATION</scope>
</reference>
<reference key="6">
    <citation type="journal article" date="2011" name="BMC Syst. Biol.">
        <title>Initial characterization of the human central proteome.</title>
        <authorList>
            <person name="Burkard T.R."/>
            <person name="Planyavsky M."/>
            <person name="Kaupe I."/>
            <person name="Breitwieser F.P."/>
            <person name="Buerckstuemmer T."/>
            <person name="Bennett K.L."/>
            <person name="Superti-Furga G."/>
            <person name="Colinge J."/>
        </authorList>
    </citation>
    <scope>IDENTIFICATION BY MASS SPECTROMETRY [LARGE SCALE ANALYSIS]</scope>
</reference>
<reference key="7">
    <citation type="journal article" date="2013" name="Mol. Cell. Biol.">
        <title>Quantitative dissection and stoichiometry determination of the human SET1/MLL histone methyltransferase complexes.</title>
        <authorList>
            <person name="van Nuland R."/>
            <person name="Smits A.H."/>
            <person name="Pallaki P."/>
            <person name="Jansen P.W."/>
            <person name="Vermeulen M."/>
            <person name="Timmers H.T."/>
        </authorList>
    </citation>
    <scope>IDENTIFICATION IN SET1B COMPLEX</scope>
</reference>
<comment type="function">
    <text evidence="2">Required for proper chromosome biorientation through the detection or correction of syntelic attachments in mitotic spindles.</text>
</comment>
<comment type="subunit">
    <text evidence="3">Component of the SET1B complex composed of the catalytic subunit SETD1B, WDR5, WDR82, RBBP5, ASH2L/ASH2, CXXC1/CFP1, HCFC1, DPY30 homotrimer and BOD1.</text>
</comment>
<comment type="interaction">
    <interactant intactId="EBI-10979484">
        <id>Q96IK1</id>
    </interactant>
    <interactant intactId="EBI-311222">
        <id>Q8N5D0</id>
        <label>WDTC1</label>
    </interactant>
    <organismsDiffer>false</organismsDiffer>
    <experiments>3</experiments>
</comment>
<comment type="interaction">
    <interactant intactId="EBI-18924329">
        <id>Q96IK1-2</id>
    </interactant>
    <interactant intactId="EBI-724719">
        <id>Q9UI12</id>
        <label>ATP6V1H</label>
    </interactant>
    <organismsDiffer>false</organismsDiffer>
    <experiments>3</experiments>
</comment>
<comment type="interaction">
    <interactant intactId="EBI-18924329">
        <id>Q96IK1-2</id>
    </interactant>
    <interactant intactId="EBI-747185">
        <id>O95817</id>
        <label>BAG3</label>
    </interactant>
    <organismsDiffer>false</organismsDiffer>
    <experiments>3</experiments>
</comment>
<comment type="interaction">
    <interactant intactId="EBI-18924329">
        <id>Q96IK1-2</id>
    </interactant>
    <interactant intactId="EBI-4286943">
        <id>P05937</id>
        <label>CALB1</label>
    </interactant>
    <organismsDiffer>false</organismsDiffer>
    <experiments>3</experiments>
</comment>
<comment type="interaction">
    <interactant intactId="EBI-18924329">
        <id>Q96IK1-2</id>
    </interactant>
    <interactant intactId="EBI-715062">
        <id>P07858</id>
        <label>CTSB</label>
    </interactant>
    <organismsDiffer>false</organismsDiffer>
    <experiments>3</experiments>
</comment>
<comment type="interaction">
    <interactant intactId="EBI-18924329">
        <id>Q96IK1-2</id>
    </interactant>
    <interactant intactId="EBI-352162">
        <id>P68104</id>
        <label>EEF1A1</label>
    </interactant>
    <organismsDiffer>false</organismsDiffer>
    <experiments>3</experiments>
</comment>
<comment type="interaction">
    <interactant intactId="EBI-18924329">
        <id>Q96IK1-2</id>
    </interactant>
    <interactant intactId="EBI-9641086">
        <id>P21333-2</id>
        <label>FLNA</label>
    </interactant>
    <organismsDiffer>false</organismsDiffer>
    <experiments>3</experiments>
</comment>
<comment type="interaction">
    <interactant intactId="EBI-18924329">
        <id>Q96IK1-2</id>
    </interactant>
    <interactant intactId="EBI-2558325">
        <id>P78333</id>
        <label>GPC5</label>
    </interactant>
    <organismsDiffer>false</organismsDiffer>
    <experiments>3</experiments>
</comment>
<comment type="interaction">
    <interactant intactId="EBI-18924329">
        <id>Q96IK1-2</id>
    </interactant>
    <interactant intactId="EBI-1050743">
        <id>P31153</id>
        <label>MAT2A</label>
    </interactant>
    <organismsDiffer>false</organismsDiffer>
    <experiments>3</experiments>
</comment>
<comment type="interaction">
    <interactant intactId="EBI-18924329">
        <id>Q96IK1-2</id>
    </interactant>
    <interactant intactId="EBI-25876328">
        <id>P28331-5</id>
        <label>NDUFS1</label>
    </interactant>
    <organismsDiffer>false</organismsDiffer>
    <experiments>3</experiments>
</comment>
<comment type="interaction">
    <interactant intactId="EBI-18924329">
        <id>Q96IK1-2</id>
    </interactant>
    <interactant intactId="EBI-514360">
        <id>P16519</id>
        <label>PCSK2</label>
    </interactant>
    <organismsDiffer>false</organismsDiffer>
    <experiments>3</experiments>
</comment>
<comment type="interaction">
    <interactant intactId="EBI-18924329">
        <id>Q96IK1-2</id>
    </interactant>
    <interactant intactId="EBI-473160">
        <id>Q8N2W9</id>
        <label>PIAS4</label>
    </interactant>
    <organismsDiffer>false</organismsDiffer>
    <experiments>3</experiments>
</comment>
<comment type="interaction">
    <interactant intactId="EBI-18924329">
        <id>Q96IK1-2</id>
    </interactant>
    <interactant intactId="EBI-353408">
        <id>P14618</id>
        <label>PKM</label>
    </interactant>
    <organismsDiffer>false</organismsDiffer>
    <experiments>3</experiments>
</comment>
<comment type="interaction">
    <interactant intactId="EBI-18924329">
        <id>Q96IK1-2</id>
    </interactant>
    <interactant intactId="EBI-742388">
        <id>Q9H8W4</id>
        <label>PLEKHF2</label>
    </interactant>
    <organismsDiffer>false</organismsDiffer>
    <experiments>3</experiments>
</comment>
<comment type="interaction">
    <interactant intactId="EBI-18924329">
        <id>Q96IK1-2</id>
    </interactant>
    <interactant intactId="EBI-11602692">
        <id>Q6NXR8</id>
        <label>RPS3A</label>
    </interactant>
    <organismsDiffer>false</organismsDiffer>
    <experiments>3</experiments>
</comment>
<comment type="interaction">
    <interactant intactId="EBI-18924329">
        <id>Q96IK1-2</id>
    </interactant>
    <interactant intactId="EBI-3956833">
        <id>P17752</id>
        <label>TPH1</label>
    </interactant>
    <organismsDiffer>false</organismsDiffer>
    <experiments>3</experiments>
</comment>
<comment type="subcellular location">
    <subcellularLocation>
        <location evidence="2">Cytoplasm</location>
        <location evidence="2">Cytoskeleton</location>
        <location evidence="2">Microtubule organizing center</location>
        <location evidence="2">Centrosome</location>
    </subcellularLocation>
    <subcellularLocation>
        <location evidence="2">Chromosome</location>
        <location evidence="2">Centromere</location>
        <location evidence="2">Kinetochore</location>
    </subcellularLocation>
    <text>Localizes at the centrosomes throughout the cell cycle, only dissociating during cytokinesis. Localizes at the kinetochore from prometaphase until anaphase.</text>
</comment>
<comment type="alternative products">
    <event type="alternative splicing"/>
    <isoform>
        <id>Q96IK1-1</id>
        <name>1</name>
        <sequence type="displayed"/>
    </isoform>
    <isoform>
        <id>Q96IK1-2</id>
        <name>2</name>
        <sequence type="described" ref="VSP_016161 VSP_016162"/>
    </isoform>
</comment>
<comment type="similarity">
    <text evidence="5">Belongs to the BOD1 family.</text>
</comment>
<keyword id="KW-0025">Alternative splicing</keyword>
<keyword id="KW-0131">Cell cycle</keyword>
<keyword id="KW-0132">Cell division</keyword>
<keyword id="KW-0137">Centromere</keyword>
<keyword id="KW-0158">Chromosome</keyword>
<keyword id="KW-0963">Cytoplasm</keyword>
<keyword id="KW-0206">Cytoskeleton</keyword>
<keyword id="KW-0995">Kinetochore</keyword>
<keyword id="KW-0498">Mitosis</keyword>
<keyword id="KW-1267">Proteomics identification</keyword>
<keyword id="KW-1185">Reference proteome</keyword>
<accession>Q96IK1</accession>
<accession>B4DXH8</accession>
<accession>Q9BTW1</accession>
<protein>
    <recommendedName>
        <fullName>Biorientation of chromosomes in cell division protein 1</fullName>
    </recommendedName>
    <alternativeName>
        <fullName>Biorientation defective protein 1</fullName>
    </alternativeName>
    <alternativeName>
        <fullName>Protein FAM44B</fullName>
    </alternativeName>
</protein>
<name>BOD1_HUMAN</name>